<proteinExistence type="evidence at protein level"/>
<reference key="1">
    <citation type="journal article" date="1989" name="J. Biol. Chem.">
        <title>Complete amino acid sequence of a Lolium perenne (perennial rye grass) pollen allergen, Lol p II.</title>
        <authorList>
            <person name="Ansari A.A."/>
            <person name="Shenbagamurthi P."/>
            <person name="Marsh D.G."/>
        </authorList>
    </citation>
    <scope>PROTEIN SEQUENCE</scope>
    <scope>ALLERGEN</scope>
</reference>
<name>MPAL2_LOLPR</name>
<comment type="subcellular location">
    <subcellularLocation>
        <location>Secreted</location>
    </subcellularLocation>
</comment>
<comment type="allergen">
    <text evidence="2">Causes an allergic reaction in human. Causes grass pollen allergy. Binds to IgE.</text>
</comment>
<comment type="similarity">
    <text evidence="3">Belongs to the expansin family. Expansin B subfamily.</text>
</comment>
<sequence>AAPVEFTVEKGSDEKNLALSIKYNKEGDSMAEVELKEHGSNEWLALKKNGDGVWEIKSDKPLKGPFNFRFVSEKGMRNVFDDVVPADFKVGTTYKPE</sequence>
<accession>P14947</accession>
<protein>
    <recommendedName>
        <fullName>Pollen allergen Lol p 2-A</fullName>
    </recommendedName>
    <alternativeName>
        <fullName>Allergen Lol p II-A</fullName>
    </alternativeName>
    <allergenName>Lol p 2-A</allergenName>
</protein>
<organism>
    <name type="scientific">Lolium perenne</name>
    <name type="common">Perennial ryegrass</name>
    <dbReference type="NCBI Taxonomy" id="4522"/>
    <lineage>
        <taxon>Eukaryota</taxon>
        <taxon>Viridiplantae</taxon>
        <taxon>Streptophyta</taxon>
        <taxon>Embryophyta</taxon>
        <taxon>Tracheophyta</taxon>
        <taxon>Spermatophyta</taxon>
        <taxon>Magnoliopsida</taxon>
        <taxon>Liliopsida</taxon>
        <taxon>Poales</taxon>
        <taxon>Poaceae</taxon>
        <taxon>BOP clade</taxon>
        <taxon>Pooideae</taxon>
        <taxon>Poodae</taxon>
        <taxon>Poeae</taxon>
        <taxon>Poeae Chloroplast Group 2 (Poeae type)</taxon>
        <taxon>Loliodinae</taxon>
        <taxon>Loliinae</taxon>
        <taxon>Lolium</taxon>
    </lineage>
</organism>
<dbReference type="PIR" id="A34291">
    <property type="entry name" value="A34291"/>
</dbReference>
<dbReference type="SMR" id="P14947"/>
<dbReference type="Allergome" id="3355">
    <property type="allergen name" value="Lol p 2.0101"/>
</dbReference>
<dbReference type="Allergome" id="457">
    <property type="allergen name" value="Lol p 2"/>
</dbReference>
<dbReference type="ABCD" id="P14947">
    <property type="antibodies" value="1 sequenced antibody"/>
</dbReference>
<dbReference type="GO" id="GO:0005576">
    <property type="term" value="C:extracellular region"/>
    <property type="evidence" value="ECO:0007669"/>
    <property type="project" value="UniProtKB-SubCell"/>
</dbReference>
<dbReference type="GO" id="GO:0009828">
    <property type="term" value="P:plant-type cell wall loosening"/>
    <property type="evidence" value="ECO:0000250"/>
    <property type="project" value="UniProtKB"/>
</dbReference>
<dbReference type="Gene3D" id="2.60.40.760">
    <property type="entry name" value="Expansin, cellulose-binding-like domain"/>
    <property type="match status" value="1"/>
</dbReference>
<dbReference type="InterPro" id="IPR005453">
    <property type="entry name" value="Allergen_Lolp2"/>
</dbReference>
<dbReference type="InterPro" id="IPR007117">
    <property type="entry name" value="Expansin_CBD"/>
</dbReference>
<dbReference type="InterPro" id="IPR036749">
    <property type="entry name" value="Expansin_CBD_sf"/>
</dbReference>
<dbReference type="PANTHER" id="PTHR31692">
    <property type="entry name" value="EXPANSIN-B3"/>
    <property type="match status" value="1"/>
</dbReference>
<dbReference type="PANTHER" id="PTHR31692:SF13">
    <property type="entry name" value="OS04G0328900 PROTEIN"/>
    <property type="match status" value="1"/>
</dbReference>
<dbReference type="Pfam" id="PF01357">
    <property type="entry name" value="Expansin_C"/>
    <property type="match status" value="1"/>
</dbReference>
<dbReference type="PRINTS" id="PR01637">
    <property type="entry name" value="LOLP2ALLERGN"/>
</dbReference>
<dbReference type="SUPFAM" id="SSF49590">
    <property type="entry name" value="PHL pollen allergen"/>
    <property type="match status" value="1"/>
</dbReference>
<dbReference type="PROSITE" id="PS50843">
    <property type="entry name" value="EXPANSIN_CBD"/>
    <property type="match status" value="1"/>
</dbReference>
<keyword id="KW-0020">Allergen</keyword>
<keyword id="KW-0903">Direct protein sequencing</keyword>
<keyword id="KW-0964">Secreted</keyword>
<feature type="chain" id="PRO_0000154572" description="Pollen allergen Lol p 2-A">
    <location>
        <begin position="1"/>
        <end position="97"/>
    </location>
</feature>
<feature type="domain" description="Expansin-like CBD" evidence="1">
    <location>
        <begin position="15"/>
        <end position="96"/>
    </location>
</feature>
<feature type="sequence variant">
    <original>S</original>
    <variation>A</variation>
    <location>
        <position position="29"/>
    </location>
</feature>
<feature type="sequence variant">
    <original>N</original>
    <variation>D</variation>
    <location>
        <position position="49"/>
    </location>
</feature>
<feature type="sequence variant">
    <original>D</original>
    <variation>E</variation>
    <location>
        <position position="59"/>
    </location>
</feature>
<feature type="sequence variant">
    <original>M</original>
    <variation>E</variation>
    <location>
        <position position="76"/>
    </location>
</feature>
<evidence type="ECO:0000255" key="1">
    <source>
        <dbReference type="PROSITE-ProRule" id="PRU00078"/>
    </source>
</evidence>
<evidence type="ECO:0000269" key="2">
    <source>
    </source>
</evidence>
<evidence type="ECO:0000305" key="3"/>